<feature type="chain" id="PRO_0000132856" description="Putative early 22.7 kDa protein">
    <location>
        <begin position="1"/>
        <end position="207"/>
    </location>
</feature>
<keyword id="KW-0244">Early protein</keyword>
<keyword id="KW-1185">Reference proteome</keyword>
<comment type="function">
    <text evidence="1">This protein is required for viral late gene expression.</text>
</comment>
<reference key="1">
    <citation type="journal article" date="1997" name="Virology">
        <title>The sequence of the Orgyia pseudotsugata multinucleocapsid nuclear polyhedrosis virus genome.</title>
        <authorList>
            <person name="Ahrens C.H."/>
            <person name="Russell R.R."/>
            <person name="Funk C.J."/>
            <person name="Evans J."/>
            <person name="Harwood S."/>
            <person name="Rohrmann G.F."/>
        </authorList>
    </citation>
    <scope>NUCLEOTIDE SEQUENCE [LARGE SCALE GENOMIC DNA]</scope>
</reference>
<accession>O10277</accession>
<gene>
    <name type="primary">DA18</name>
    <name type="ORF">ORF16</name>
</gene>
<name>VE18_NPVOP</name>
<protein>
    <recommendedName>
        <fullName>Putative early 22.7 kDa protein</fullName>
    </recommendedName>
</protein>
<organismHost>
    <name type="scientific">Orgyia pseudotsugata</name>
    <name type="common">Douglas-fir tussock moth</name>
    <dbReference type="NCBI Taxonomy" id="33414"/>
</organismHost>
<evidence type="ECO:0000250" key="1"/>
<dbReference type="EMBL" id="U75930">
    <property type="protein sequence ID" value="AAC59015.1"/>
    <property type="molecule type" value="Genomic_DNA"/>
</dbReference>
<dbReference type="RefSeq" id="NP_046172.1">
    <property type="nucleotide sequence ID" value="NC_001875.2"/>
</dbReference>
<dbReference type="KEGG" id="vg:912056"/>
<dbReference type="OrthoDB" id="18602at10239"/>
<dbReference type="Proteomes" id="UP000009248">
    <property type="component" value="Genome"/>
</dbReference>
<dbReference type="InterPro" id="IPR009661">
    <property type="entry name" value="AcMNPV_Da18"/>
</dbReference>
<dbReference type="Pfam" id="PF06856">
    <property type="entry name" value="AcMNPV_Orf17"/>
    <property type="match status" value="1"/>
</dbReference>
<sequence>MEITVTLVPINLRGAEEPERNQRFRLKPLCAAAEVCLAVKCRSPFAKFKVLISVTNFDNKHLQATVCSRHAAVCVVNAPGQREVVFDGFAKPDDEGATVPLVVGPLFAARQAGRCVRAAVDAIQRQQTVLKVFINEAYLQSAWGAVRGLFFSDNNHESDLTSNVGKFISVDPTDVGARGANSSKWVPAINYVTGRQLLTILFIFKFI</sequence>
<organism>
    <name type="scientific">Orgyia pseudotsugata multicapsid polyhedrosis virus</name>
    <name type="common">OpMNPV</name>
    <dbReference type="NCBI Taxonomy" id="262177"/>
    <lineage>
        <taxon>Viruses</taxon>
        <taxon>Viruses incertae sedis</taxon>
        <taxon>Naldaviricetes</taxon>
        <taxon>Lefavirales</taxon>
        <taxon>Baculoviridae</taxon>
        <taxon>Alphabaculovirus</taxon>
        <taxon>Alphabaculovirus orpseudotsugatae</taxon>
    </lineage>
</organism>
<proteinExistence type="inferred from homology"/>